<sequence length="126" mass="14557">MAEKLPPEVQAQLAKFQQLKDQLDRLLLEKSTIENELREINKVLEELSVLNADATIYKIVGNLLVKSDKTSVEKELNDRKELLELRSRTYQKQESILRKQLEDLQAKINEMLSKYYPQGGQTGIKA</sequence>
<name>PFDB_SACI4</name>
<proteinExistence type="inferred from homology"/>
<accession>C3MVG9</accession>
<keyword id="KW-0143">Chaperone</keyword>
<keyword id="KW-0963">Cytoplasm</keyword>
<gene>
    <name evidence="1" type="primary">pfdB</name>
    <name type="ordered locus">M1425_1411</name>
</gene>
<organism>
    <name type="scientific">Saccharolobus islandicus (strain M.14.25 / Kamchatka #1)</name>
    <name type="common">Sulfolobus islandicus</name>
    <dbReference type="NCBI Taxonomy" id="427317"/>
    <lineage>
        <taxon>Archaea</taxon>
        <taxon>Thermoproteota</taxon>
        <taxon>Thermoprotei</taxon>
        <taxon>Sulfolobales</taxon>
        <taxon>Sulfolobaceae</taxon>
        <taxon>Saccharolobus</taxon>
    </lineage>
</organism>
<evidence type="ECO:0000255" key="1">
    <source>
        <dbReference type="HAMAP-Rule" id="MF_00307"/>
    </source>
</evidence>
<comment type="function">
    <text evidence="1">Molecular chaperone capable of stabilizing a range of proteins. Seems to fulfill an ATP-independent, HSP70-like function in archaeal de novo protein folding.</text>
</comment>
<comment type="subunit">
    <text evidence="1">Heterohexamer of two alpha and four beta subunits.</text>
</comment>
<comment type="subcellular location">
    <subcellularLocation>
        <location evidence="1">Cytoplasm</location>
    </subcellularLocation>
</comment>
<comment type="similarity">
    <text evidence="1">Belongs to the prefoldin subunit beta family.</text>
</comment>
<protein>
    <recommendedName>
        <fullName evidence="1">Prefoldin subunit beta</fullName>
    </recommendedName>
    <alternativeName>
        <fullName evidence="1">GimC subunit beta</fullName>
    </alternativeName>
</protein>
<feature type="chain" id="PRO_1000205021" description="Prefoldin subunit beta">
    <location>
        <begin position="1"/>
        <end position="126"/>
    </location>
</feature>
<dbReference type="EMBL" id="CP001400">
    <property type="protein sequence ID" value="ACP38164.1"/>
    <property type="molecule type" value="Genomic_DNA"/>
</dbReference>
<dbReference type="RefSeq" id="WP_012711409.1">
    <property type="nucleotide sequence ID" value="NC_012588.1"/>
</dbReference>
<dbReference type="SMR" id="C3MVG9"/>
<dbReference type="KEGG" id="sia:M1425_1411"/>
<dbReference type="HOGENOM" id="CLU_131909_2_1_2"/>
<dbReference type="Proteomes" id="UP000001350">
    <property type="component" value="Chromosome"/>
</dbReference>
<dbReference type="GO" id="GO:0005737">
    <property type="term" value="C:cytoplasm"/>
    <property type="evidence" value="ECO:0007669"/>
    <property type="project" value="UniProtKB-SubCell"/>
</dbReference>
<dbReference type="GO" id="GO:0016272">
    <property type="term" value="C:prefoldin complex"/>
    <property type="evidence" value="ECO:0007669"/>
    <property type="project" value="UniProtKB-UniRule"/>
</dbReference>
<dbReference type="GO" id="GO:0051087">
    <property type="term" value="F:protein-folding chaperone binding"/>
    <property type="evidence" value="ECO:0007669"/>
    <property type="project" value="TreeGrafter"/>
</dbReference>
<dbReference type="GO" id="GO:0051082">
    <property type="term" value="F:unfolded protein binding"/>
    <property type="evidence" value="ECO:0007669"/>
    <property type="project" value="UniProtKB-UniRule"/>
</dbReference>
<dbReference type="GO" id="GO:0051131">
    <property type="term" value="P:chaperone-mediated protein complex assembly"/>
    <property type="evidence" value="ECO:0007669"/>
    <property type="project" value="TreeGrafter"/>
</dbReference>
<dbReference type="GO" id="GO:0006457">
    <property type="term" value="P:protein folding"/>
    <property type="evidence" value="ECO:0007669"/>
    <property type="project" value="UniProtKB-UniRule"/>
</dbReference>
<dbReference type="CDD" id="cd23162">
    <property type="entry name" value="Prefoldin_beta_GimC"/>
    <property type="match status" value="1"/>
</dbReference>
<dbReference type="FunFam" id="1.10.287.370:FF:000013">
    <property type="entry name" value="Prefoldin subunit beta"/>
    <property type="match status" value="1"/>
</dbReference>
<dbReference type="Gene3D" id="1.10.287.370">
    <property type="match status" value="1"/>
</dbReference>
<dbReference type="HAMAP" id="MF_00307">
    <property type="entry name" value="PfdB"/>
    <property type="match status" value="1"/>
</dbReference>
<dbReference type="InterPro" id="IPR002777">
    <property type="entry name" value="PFD_beta-like"/>
</dbReference>
<dbReference type="InterPro" id="IPR012713">
    <property type="entry name" value="PfdB"/>
</dbReference>
<dbReference type="InterPro" id="IPR009053">
    <property type="entry name" value="Prefoldin"/>
</dbReference>
<dbReference type="NCBIfam" id="TIGR02338">
    <property type="entry name" value="gimC_beta"/>
    <property type="match status" value="1"/>
</dbReference>
<dbReference type="PANTHER" id="PTHR21431">
    <property type="entry name" value="PREFOLDIN SUBUNIT 6"/>
    <property type="match status" value="1"/>
</dbReference>
<dbReference type="PANTHER" id="PTHR21431:SF0">
    <property type="entry name" value="PREFOLDIN SUBUNIT 6"/>
    <property type="match status" value="1"/>
</dbReference>
<dbReference type="Pfam" id="PF01920">
    <property type="entry name" value="Prefoldin_2"/>
    <property type="match status" value="1"/>
</dbReference>
<dbReference type="SUPFAM" id="SSF46579">
    <property type="entry name" value="Prefoldin"/>
    <property type="match status" value="1"/>
</dbReference>
<reference key="1">
    <citation type="journal article" date="2009" name="Proc. Natl. Acad. Sci. U.S.A.">
        <title>Biogeography of the Sulfolobus islandicus pan-genome.</title>
        <authorList>
            <person name="Reno M.L."/>
            <person name="Held N.L."/>
            <person name="Fields C.J."/>
            <person name="Burke P.V."/>
            <person name="Whitaker R.J."/>
        </authorList>
    </citation>
    <scope>NUCLEOTIDE SEQUENCE [LARGE SCALE GENOMIC DNA]</scope>
    <source>
        <strain>M.14.25 / Kamchatka #1</strain>
    </source>
</reference>